<feature type="chain" id="PRO_1000115364" description="Chorismate synthase">
    <location>
        <begin position="1"/>
        <end position="378"/>
    </location>
</feature>
<feature type="region of interest" description="Disordered" evidence="2">
    <location>
        <begin position="37"/>
        <end position="60"/>
    </location>
</feature>
<feature type="binding site" evidence="1">
    <location>
        <position position="47"/>
    </location>
    <ligand>
        <name>NADP(+)</name>
        <dbReference type="ChEBI" id="CHEBI:58349"/>
    </ligand>
</feature>
<feature type="binding site" evidence="1">
    <location>
        <begin position="124"/>
        <end position="126"/>
    </location>
    <ligand>
        <name>FMN</name>
        <dbReference type="ChEBI" id="CHEBI:58210"/>
    </ligand>
</feature>
<feature type="binding site" evidence="1">
    <location>
        <position position="289"/>
    </location>
    <ligand>
        <name>FMN</name>
        <dbReference type="ChEBI" id="CHEBI:58210"/>
    </ligand>
</feature>
<feature type="binding site" evidence="1">
    <location>
        <begin position="304"/>
        <end position="308"/>
    </location>
    <ligand>
        <name>FMN</name>
        <dbReference type="ChEBI" id="CHEBI:58210"/>
    </ligand>
</feature>
<feature type="binding site" evidence="1">
    <location>
        <position position="330"/>
    </location>
    <ligand>
        <name>FMN</name>
        <dbReference type="ChEBI" id="CHEBI:58210"/>
    </ligand>
</feature>
<comment type="function">
    <text evidence="1">Catalyzes the anti-1,4-elimination of the C-3 phosphate and the C-6 proR hydrogen from 5-enolpyruvylshikimate-3-phosphate (EPSP) to yield chorismate, which is the branch point compound that serves as the starting substrate for the three terminal pathways of aromatic amino acid biosynthesis. This reaction introduces a second double bond into the aromatic ring system.</text>
</comment>
<comment type="catalytic activity">
    <reaction evidence="1">
        <text>5-O-(1-carboxyvinyl)-3-phosphoshikimate = chorismate + phosphate</text>
        <dbReference type="Rhea" id="RHEA:21020"/>
        <dbReference type="ChEBI" id="CHEBI:29748"/>
        <dbReference type="ChEBI" id="CHEBI:43474"/>
        <dbReference type="ChEBI" id="CHEBI:57701"/>
        <dbReference type="EC" id="4.2.3.5"/>
    </reaction>
</comment>
<comment type="cofactor">
    <cofactor evidence="1">
        <name>FMNH2</name>
        <dbReference type="ChEBI" id="CHEBI:57618"/>
    </cofactor>
    <text evidence="1">Reduced FMN (FMNH(2)).</text>
</comment>
<comment type="pathway">
    <text evidence="1">Metabolic intermediate biosynthesis; chorismate biosynthesis; chorismate from D-erythrose 4-phosphate and phosphoenolpyruvate: step 7/7.</text>
</comment>
<comment type="subunit">
    <text evidence="1">Homotetramer.</text>
</comment>
<comment type="similarity">
    <text evidence="1">Belongs to the chorismate synthase family.</text>
</comment>
<dbReference type="EC" id="4.2.3.5" evidence="1"/>
<dbReference type="EMBL" id="CP000786">
    <property type="protein sequence ID" value="ABZ99470.1"/>
    <property type="molecule type" value="Genomic_DNA"/>
</dbReference>
<dbReference type="RefSeq" id="WP_012390326.1">
    <property type="nucleotide sequence ID" value="NC_010602.1"/>
</dbReference>
<dbReference type="SMR" id="B0SRH8"/>
<dbReference type="STRING" id="456481.LEPBI_I3408"/>
<dbReference type="KEGG" id="lbi:LEPBI_I3408"/>
<dbReference type="HOGENOM" id="CLU_034547_0_1_12"/>
<dbReference type="OrthoDB" id="9771806at2"/>
<dbReference type="BioCyc" id="LBIF456481:LEPBI_RS16695-MONOMER"/>
<dbReference type="UniPathway" id="UPA00053">
    <property type="reaction ID" value="UER00090"/>
</dbReference>
<dbReference type="Proteomes" id="UP000001847">
    <property type="component" value="Chromosome I"/>
</dbReference>
<dbReference type="GO" id="GO:0005829">
    <property type="term" value="C:cytosol"/>
    <property type="evidence" value="ECO:0007669"/>
    <property type="project" value="TreeGrafter"/>
</dbReference>
<dbReference type="GO" id="GO:0004107">
    <property type="term" value="F:chorismate synthase activity"/>
    <property type="evidence" value="ECO:0007669"/>
    <property type="project" value="UniProtKB-UniRule"/>
</dbReference>
<dbReference type="GO" id="GO:0010181">
    <property type="term" value="F:FMN binding"/>
    <property type="evidence" value="ECO:0007669"/>
    <property type="project" value="TreeGrafter"/>
</dbReference>
<dbReference type="GO" id="GO:0008652">
    <property type="term" value="P:amino acid biosynthetic process"/>
    <property type="evidence" value="ECO:0007669"/>
    <property type="project" value="UniProtKB-KW"/>
</dbReference>
<dbReference type="GO" id="GO:0009073">
    <property type="term" value="P:aromatic amino acid family biosynthetic process"/>
    <property type="evidence" value="ECO:0007669"/>
    <property type="project" value="UniProtKB-KW"/>
</dbReference>
<dbReference type="GO" id="GO:0009423">
    <property type="term" value="P:chorismate biosynthetic process"/>
    <property type="evidence" value="ECO:0007669"/>
    <property type="project" value="UniProtKB-UniRule"/>
</dbReference>
<dbReference type="CDD" id="cd07304">
    <property type="entry name" value="Chorismate_synthase"/>
    <property type="match status" value="1"/>
</dbReference>
<dbReference type="FunFam" id="3.60.150.10:FF:000003">
    <property type="entry name" value="Chorismate synthase"/>
    <property type="match status" value="1"/>
</dbReference>
<dbReference type="Gene3D" id="3.60.150.10">
    <property type="entry name" value="Chorismate synthase AroC"/>
    <property type="match status" value="1"/>
</dbReference>
<dbReference type="HAMAP" id="MF_00300">
    <property type="entry name" value="Chorismate_synth"/>
    <property type="match status" value="1"/>
</dbReference>
<dbReference type="InterPro" id="IPR000453">
    <property type="entry name" value="Chorismate_synth"/>
</dbReference>
<dbReference type="InterPro" id="IPR035904">
    <property type="entry name" value="Chorismate_synth_AroC_sf"/>
</dbReference>
<dbReference type="InterPro" id="IPR020541">
    <property type="entry name" value="Chorismate_synthase_CS"/>
</dbReference>
<dbReference type="NCBIfam" id="TIGR00033">
    <property type="entry name" value="aroC"/>
    <property type="match status" value="1"/>
</dbReference>
<dbReference type="NCBIfam" id="NF003793">
    <property type="entry name" value="PRK05382.1"/>
    <property type="match status" value="1"/>
</dbReference>
<dbReference type="PANTHER" id="PTHR21085">
    <property type="entry name" value="CHORISMATE SYNTHASE"/>
    <property type="match status" value="1"/>
</dbReference>
<dbReference type="PANTHER" id="PTHR21085:SF0">
    <property type="entry name" value="CHORISMATE SYNTHASE"/>
    <property type="match status" value="1"/>
</dbReference>
<dbReference type="Pfam" id="PF01264">
    <property type="entry name" value="Chorismate_synt"/>
    <property type="match status" value="1"/>
</dbReference>
<dbReference type="PIRSF" id="PIRSF001456">
    <property type="entry name" value="Chorismate_synth"/>
    <property type="match status" value="1"/>
</dbReference>
<dbReference type="SUPFAM" id="SSF103263">
    <property type="entry name" value="Chorismate synthase, AroC"/>
    <property type="match status" value="1"/>
</dbReference>
<dbReference type="PROSITE" id="PS00787">
    <property type="entry name" value="CHORISMATE_SYNTHASE_1"/>
    <property type="match status" value="1"/>
</dbReference>
<dbReference type="PROSITE" id="PS00789">
    <property type="entry name" value="CHORISMATE_SYNTHASE_3"/>
    <property type="match status" value="1"/>
</dbReference>
<name>AROC_LEPBP</name>
<protein>
    <recommendedName>
        <fullName evidence="1">Chorismate synthase</fullName>
        <shortName evidence="1">CS</shortName>
        <ecNumber evidence="1">4.2.3.5</ecNumber>
    </recommendedName>
    <alternativeName>
        <fullName evidence="1">5-enolpyruvylshikimate-3-phosphate phospholyase</fullName>
    </alternativeName>
</protein>
<sequence length="378" mass="41220">MPSSWGKIFRVSTFGESHGTSVGVVVDGVPAGLPFPEEEIQKDLTRRRPGQNDLTTPRDEKDRMVVESGVFEGKTTGSPILMKVNNQNTIGSDYDEMAHVFRPSHADYTYSEKYGHRAHVGGGRSSVRETIGRVAAAGLARVILENELGISTVGFVDSIGPIDSNITEDEYPISRDLVDQFPTRCPKASANEEMETLIRKLRDEGDSVGGVVKVVVRNLPPGLGDPVYDKLDADLAKAILSISACKGFEVGSGFSGTRQTGSTHNDEFYIEEGTGKVKTRTNRSGGIQGGISNGMDLVIRAAFKPTSTIKKEQKTINDQNKETILKAKGRHDPCVLPRAVPIVEAVVNLVLVDAYLYQRALQPKWFMKYANLNAIPNQ</sequence>
<accession>B0SRH8</accession>
<keyword id="KW-0028">Amino-acid biosynthesis</keyword>
<keyword id="KW-0057">Aromatic amino acid biosynthesis</keyword>
<keyword id="KW-0274">FAD</keyword>
<keyword id="KW-0285">Flavoprotein</keyword>
<keyword id="KW-0288">FMN</keyword>
<keyword id="KW-0456">Lyase</keyword>
<keyword id="KW-0521">NADP</keyword>
<keyword id="KW-1185">Reference proteome</keyword>
<reference key="1">
    <citation type="journal article" date="2008" name="PLoS ONE">
        <title>Genome sequence of the saprophyte Leptospira biflexa provides insights into the evolution of Leptospira and the pathogenesis of leptospirosis.</title>
        <authorList>
            <person name="Picardeau M."/>
            <person name="Bulach D.M."/>
            <person name="Bouchier C."/>
            <person name="Zuerner R.L."/>
            <person name="Zidane N."/>
            <person name="Wilson P.J."/>
            <person name="Creno S."/>
            <person name="Kuczek E.S."/>
            <person name="Bommezzadri S."/>
            <person name="Davis J.C."/>
            <person name="McGrath A."/>
            <person name="Johnson M.J."/>
            <person name="Boursaux-Eude C."/>
            <person name="Seemann T."/>
            <person name="Rouy Z."/>
            <person name="Coppel R.L."/>
            <person name="Rood J.I."/>
            <person name="Lajus A."/>
            <person name="Davies J.K."/>
            <person name="Medigue C."/>
            <person name="Adler B."/>
        </authorList>
    </citation>
    <scope>NUCLEOTIDE SEQUENCE [LARGE SCALE GENOMIC DNA]</scope>
    <source>
        <strain>Patoc 1 / ATCC 23582 / Paris</strain>
    </source>
</reference>
<gene>
    <name evidence="1" type="primary">aroC</name>
    <name type="ordered locus">LEPBI_I3408</name>
</gene>
<proteinExistence type="inferred from homology"/>
<evidence type="ECO:0000255" key="1">
    <source>
        <dbReference type="HAMAP-Rule" id="MF_00300"/>
    </source>
</evidence>
<evidence type="ECO:0000256" key="2">
    <source>
        <dbReference type="SAM" id="MobiDB-lite"/>
    </source>
</evidence>
<organism>
    <name type="scientific">Leptospira biflexa serovar Patoc (strain Patoc 1 / ATCC 23582 / Paris)</name>
    <dbReference type="NCBI Taxonomy" id="456481"/>
    <lineage>
        <taxon>Bacteria</taxon>
        <taxon>Pseudomonadati</taxon>
        <taxon>Spirochaetota</taxon>
        <taxon>Spirochaetia</taxon>
        <taxon>Leptospirales</taxon>
        <taxon>Leptospiraceae</taxon>
        <taxon>Leptospira</taxon>
    </lineage>
</organism>